<sequence length="218" mass="25274">MKQPAPVYQRIAGHQWRHIWLSGDIHGCLEQLRRKLWHCRFDPWRDLLISVGDVIDRGPQSLRCLQLLEQHWVCAVRGNHEQMAMDALASQQMSLWLMNGGDWFIALADNQQKQAKTALEKCQHLPFILEVHSRTGKHVIAHADYPDDVYEWQKDVDLHQVLWSRSRLGERQKGQGITGADHFWFGHTPLRHRVDIGNLHYIDTGAVFGGELTLVQLQ</sequence>
<accession>P55798</accession>
<accession>P76276</accession>
<evidence type="ECO:0000250" key="1"/>
<evidence type="ECO:0000269" key="2">
    <source>
    </source>
</evidence>
<evidence type="ECO:0000305" key="3"/>
<dbReference type="EC" id="3.1.3.16"/>
<dbReference type="EMBL" id="U51991">
    <property type="protein sequence ID" value="AAB53934.1"/>
    <property type="molecule type" value="Genomic_DNA"/>
</dbReference>
<dbReference type="EMBL" id="U00096">
    <property type="protein sequence ID" value="AAC74908.2"/>
    <property type="molecule type" value="Genomic_DNA"/>
</dbReference>
<dbReference type="EMBL" id="AP009048">
    <property type="protein sequence ID" value="BAA15649.2"/>
    <property type="molecule type" value="Genomic_DNA"/>
</dbReference>
<dbReference type="PIR" id="F64945">
    <property type="entry name" value="F64945"/>
</dbReference>
<dbReference type="RefSeq" id="NP_416352.4">
    <property type="nucleotide sequence ID" value="NC_000913.3"/>
</dbReference>
<dbReference type="RefSeq" id="WP_000812724.1">
    <property type="nucleotide sequence ID" value="NZ_STEB01000009.1"/>
</dbReference>
<dbReference type="SMR" id="P55798"/>
<dbReference type="BioGRID" id="4261399">
    <property type="interactions" value="8"/>
</dbReference>
<dbReference type="FunCoup" id="P55798">
    <property type="interactions" value="90"/>
</dbReference>
<dbReference type="IntAct" id="P55798">
    <property type="interactions" value="1"/>
</dbReference>
<dbReference type="STRING" id="511145.b1838"/>
<dbReference type="PaxDb" id="511145-b1838"/>
<dbReference type="EnsemblBacteria" id="AAC74908">
    <property type="protein sequence ID" value="AAC74908"/>
    <property type="gene ID" value="b1838"/>
</dbReference>
<dbReference type="GeneID" id="946356"/>
<dbReference type="KEGG" id="ecj:JW1827"/>
<dbReference type="KEGG" id="eco:b1838"/>
<dbReference type="KEGG" id="ecoc:C3026_10470"/>
<dbReference type="PATRIC" id="fig|1411691.4.peg.412"/>
<dbReference type="EchoBASE" id="EB3780"/>
<dbReference type="eggNOG" id="COG0639">
    <property type="taxonomic scope" value="Bacteria"/>
</dbReference>
<dbReference type="HOGENOM" id="CLU_023125_1_1_6"/>
<dbReference type="InParanoid" id="P55798"/>
<dbReference type="OMA" id="MNGGDWY"/>
<dbReference type="OrthoDB" id="5296354at2"/>
<dbReference type="PhylomeDB" id="P55798"/>
<dbReference type="BioCyc" id="EcoCyc:G7011-MONOMER"/>
<dbReference type="BioCyc" id="MetaCyc:G7011-MONOMER"/>
<dbReference type="BRENDA" id="3.1.3.16">
    <property type="organism ID" value="2026"/>
</dbReference>
<dbReference type="BRENDA" id="3.1.3.48">
    <property type="organism ID" value="2026"/>
</dbReference>
<dbReference type="PRO" id="PR:P55798"/>
<dbReference type="Proteomes" id="UP000000625">
    <property type="component" value="Chromosome"/>
</dbReference>
<dbReference type="GO" id="GO:0005737">
    <property type="term" value="C:cytoplasm"/>
    <property type="evidence" value="ECO:0000318"/>
    <property type="project" value="GO_Central"/>
</dbReference>
<dbReference type="GO" id="GO:0008803">
    <property type="term" value="F:bis(5'-nucleosyl)-tetraphosphatase (symmetrical) activity"/>
    <property type="evidence" value="ECO:0000318"/>
    <property type="project" value="GO_Central"/>
</dbReference>
<dbReference type="GO" id="GO:0046872">
    <property type="term" value="F:metal ion binding"/>
    <property type="evidence" value="ECO:0007669"/>
    <property type="project" value="UniProtKB-KW"/>
</dbReference>
<dbReference type="GO" id="GO:0016791">
    <property type="term" value="F:phosphatase activity"/>
    <property type="evidence" value="ECO:0000318"/>
    <property type="project" value="GO_Central"/>
</dbReference>
<dbReference type="GO" id="GO:0004722">
    <property type="term" value="F:protein serine/threonine phosphatase activity"/>
    <property type="evidence" value="ECO:0007669"/>
    <property type="project" value="UniProtKB-EC"/>
</dbReference>
<dbReference type="GO" id="GO:0008138">
    <property type="term" value="F:protein tyrosine/serine/threonine phosphatase activity"/>
    <property type="evidence" value="ECO:0000314"/>
    <property type="project" value="EcoCyc"/>
</dbReference>
<dbReference type="GO" id="GO:0009266">
    <property type="term" value="P:response to temperature stimulus"/>
    <property type="evidence" value="ECO:0000270"/>
    <property type="project" value="EcoCyc"/>
</dbReference>
<dbReference type="GO" id="GO:0110154">
    <property type="term" value="P:RNA decapping"/>
    <property type="evidence" value="ECO:0000318"/>
    <property type="project" value="GO_Central"/>
</dbReference>
<dbReference type="FunFam" id="3.60.21.10:FF:000041">
    <property type="entry name" value="Serine/threonine-protein phosphatase 1"/>
    <property type="match status" value="1"/>
</dbReference>
<dbReference type="Gene3D" id="3.60.21.10">
    <property type="match status" value="1"/>
</dbReference>
<dbReference type="InterPro" id="IPR050126">
    <property type="entry name" value="Ap4A_hydrolase"/>
</dbReference>
<dbReference type="InterPro" id="IPR004843">
    <property type="entry name" value="Calcineurin-like_PHP_ApaH"/>
</dbReference>
<dbReference type="InterPro" id="IPR029052">
    <property type="entry name" value="Metallo-depent_PP-like"/>
</dbReference>
<dbReference type="InterPro" id="IPR006186">
    <property type="entry name" value="Ser/Thr-sp_prot-phosphatase"/>
</dbReference>
<dbReference type="NCBIfam" id="NF008516">
    <property type="entry name" value="PRK11439.1"/>
    <property type="match status" value="1"/>
</dbReference>
<dbReference type="PANTHER" id="PTHR42850">
    <property type="entry name" value="METALLOPHOSPHOESTERASE"/>
    <property type="match status" value="1"/>
</dbReference>
<dbReference type="PANTHER" id="PTHR42850:SF10">
    <property type="entry name" value="SERINE_THREONINE-PROTEIN PHOSPHATASE 1"/>
    <property type="match status" value="1"/>
</dbReference>
<dbReference type="Pfam" id="PF00149">
    <property type="entry name" value="Metallophos"/>
    <property type="match status" value="1"/>
</dbReference>
<dbReference type="SUPFAM" id="SSF56300">
    <property type="entry name" value="Metallo-dependent phosphatases"/>
    <property type="match status" value="1"/>
</dbReference>
<dbReference type="PROSITE" id="PS00125">
    <property type="entry name" value="SER_THR_PHOSPHATASE"/>
    <property type="match status" value="1"/>
</dbReference>
<keyword id="KW-0378">Hydrolase</keyword>
<keyword id="KW-0464">Manganese</keyword>
<keyword id="KW-0479">Metal-binding</keyword>
<keyword id="KW-0904">Protein phosphatase</keyword>
<keyword id="KW-1185">Reference proteome</keyword>
<name>PRP1_ECOLI</name>
<protein>
    <recommendedName>
        <fullName>Serine/threonine-protein phosphatase 1</fullName>
        <ecNumber>3.1.3.16</ecNumber>
    </recommendedName>
</protein>
<organism>
    <name type="scientific">Escherichia coli (strain K12)</name>
    <dbReference type="NCBI Taxonomy" id="83333"/>
    <lineage>
        <taxon>Bacteria</taxon>
        <taxon>Pseudomonadati</taxon>
        <taxon>Pseudomonadota</taxon>
        <taxon>Gammaproteobacteria</taxon>
        <taxon>Enterobacterales</taxon>
        <taxon>Enterobacteriaceae</taxon>
        <taxon>Escherichia</taxon>
    </lineage>
</organism>
<comment type="function">
    <text>Plays a key role in signaling protein misfolding via the CpxR/CPXA transducing system. It also modulates the phosphorylated status of many phosphoproteins in E.coli, some of which acting as major chaperones. Has been shown, in vitro, to act on Ser, Thr and Tyr-phosphorylated substrates.</text>
</comment>
<comment type="catalytic activity">
    <reaction>
        <text>O-phospho-L-seryl-[protein] + H2O = L-seryl-[protein] + phosphate</text>
        <dbReference type="Rhea" id="RHEA:20629"/>
        <dbReference type="Rhea" id="RHEA-COMP:9863"/>
        <dbReference type="Rhea" id="RHEA-COMP:11604"/>
        <dbReference type="ChEBI" id="CHEBI:15377"/>
        <dbReference type="ChEBI" id="CHEBI:29999"/>
        <dbReference type="ChEBI" id="CHEBI:43474"/>
        <dbReference type="ChEBI" id="CHEBI:83421"/>
        <dbReference type="EC" id="3.1.3.16"/>
    </reaction>
</comment>
<comment type="catalytic activity">
    <reaction>
        <text>O-phospho-L-threonyl-[protein] + H2O = L-threonyl-[protein] + phosphate</text>
        <dbReference type="Rhea" id="RHEA:47004"/>
        <dbReference type="Rhea" id="RHEA-COMP:11060"/>
        <dbReference type="Rhea" id="RHEA-COMP:11605"/>
        <dbReference type="ChEBI" id="CHEBI:15377"/>
        <dbReference type="ChEBI" id="CHEBI:30013"/>
        <dbReference type="ChEBI" id="CHEBI:43474"/>
        <dbReference type="ChEBI" id="CHEBI:61977"/>
        <dbReference type="EC" id="3.1.3.16"/>
    </reaction>
</comment>
<comment type="cofactor">
    <cofactor evidence="1">
        <name>Mn(2+)</name>
        <dbReference type="ChEBI" id="CHEBI:29035"/>
    </cofactor>
    <text evidence="1">Binds 2 manganese ions per subunit.</text>
</comment>
<comment type="similarity">
    <text evidence="3">Belongs to the PPP phosphatase family. PP-1 subfamily.</text>
</comment>
<proteinExistence type="evidence at protein level"/>
<gene>
    <name type="primary">pphA</name>
    <name type="synonym">prpA</name>
    <name type="synonym">yebX</name>
    <name type="ordered locus">b1838</name>
    <name type="ordered locus">JW1827</name>
</gene>
<feature type="chain" id="PRO_0000058908" description="Serine/threonine-protein phosphatase 1">
    <location>
        <begin position="1"/>
        <end position="218"/>
    </location>
</feature>
<feature type="active site" description="Proton donor" evidence="1">
    <location>
        <position position="80"/>
    </location>
</feature>
<feature type="binding site" evidence="1">
    <location>
        <position position="24"/>
    </location>
    <ligand>
        <name>Mn(2+)</name>
        <dbReference type="ChEBI" id="CHEBI:29035"/>
        <label>1</label>
    </ligand>
</feature>
<feature type="binding site" evidence="1">
    <location>
        <position position="26"/>
    </location>
    <ligand>
        <name>Mn(2+)</name>
        <dbReference type="ChEBI" id="CHEBI:29035"/>
        <label>1</label>
    </ligand>
</feature>
<feature type="binding site" evidence="1">
    <location>
        <position position="53"/>
    </location>
    <ligand>
        <name>Mn(2+)</name>
        <dbReference type="ChEBI" id="CHEBI:29035"/>
        <label>1</label>
    </ligand>
</feature>
<feature type="binding site" evidence="1">
    <location>
        <position position="53"/>
    </location>
    <ligand>
        <name>Mn(2+)</name>
        <dbReference type="ChEBI" id="CHEBI:29035"/>
        <label>2</label>
    </ligand>
</feature>
<feature type="binding site" evidence="1">
    <location>
        <position position="79"/>
    </location>
    <ligand>
        <name>Mn(2+)</name>
        <dbReference type="ChEBI" id="CHEBI:29035"/>
        <label>2</label>
    </ligand>
</feature>
<feature type="binding site" evidence="1">
    <location>
        <position position="187"/>
    </location>
    <ligand>
        <name>Mn(2+)</name>
        <dbReference type="ChEBI" id="CHEBI:29035"/>
        <label>2</label>
    </ligand>
</feature>
<feature type="mutagenesis site" description="Loss of function." evidence="2">
    <original>D</original>
    <variation>V</variation>
    <location>
        <position position="24"/>
    </location>
</feature>
<feature type="mutagenesis site" description="Loss of function." evidence="2">
    <original>H</original>
    <variation>L</variation>
    <location>
        <position position="26"/>
    </location>
</feature>
<feature type="mutagenesis site" description="Loss of function." evidence="2">
    <original>H</original>
    <variation>N</variation>
    <location>
        <position position="26"/>
    </location>
</feature>
<feature type="mutagenesis site" description="Loss of function." evidence="2">
    <original>L</original>
    <variation>Q</variation>
    <location>
        <position position="107"/>
    </location>
</feature>
<reference key="1">
    <citation type="journal article" date="1997" name="EMBO J.">
        <title>Signal transduction pathways in response to protein misfolding in the extracytoplasmic compartments of E. coli: role of two new phosphoprotein phosphatases PrpA and PrpB.</title>
        <authorList>
            <person name="Missiakas D."/>
            <person name="Raina S."/>
        </authorList>
    </citation>
    <scope>NUCLEOTIDE SEQUENCE [GENOMIC DNA]</scope>
    <scope>MUTAGENESIS OF ASP-24; HIS-26 AND LEU-107</scope>
    <source>
        <strain>K12 / MC4100 / ATCC 35695 / DSM 6574</strain>
    </source>
</reference>
<reference key="2">
    <citation type="journal article" date="1996" name="DNA Res.">
        <title>A 460-kb DNA sequence of the Escherichia coli K-12 genome corresponding to the 40.1-50.0 min region on the linkage map.</title>
        <authorList>
            <person name="Itoh T."/>
            <person name="Aiba H."/>
            <person name="Baba T."/>
            <person name="Fujita K."/>
            <person name="Hayashi K."/>
            <person name="Inada T."/>
            <person name="Isono K."/>
            <person name="Kasai H."/>
            <person name="Kimura S."/>
            <person name="Kitakawa M."/>
            <person name="Kitagawa M."/>
            <person name="Makino K."/>
            <person name="Miki T."/>
            <person name="Mizobuchi K."/>
            <person name="Mori H."/>
            <person name="Mori T."/>
            <person name="Motomura K."/>
            <person name="Nakade S."/>
            <person name="Nakamura Y."/>
            <person name="Nashimoto H."/>
            <person name="Nishio Y."/>
            <person name="Oshima T."/>
            <person name="Saito N."/>
            <person name="Sampei G."/>
            <person name="Seki Y."/>
            <person name="Sivasundaram S."/>
            <person name="Tagami H."/>
            <person name="Takeda J."/>
            <person name="Takemoto K."/>
            <person name="Wada C."/>
            <person name="Yamamoto Y."/>
            <person name="Horiuchi T."/>
        </authorList>
    </citation>
    <scope>NUCLEOTIDE SEQUENCE [LARGE SCALE GENOMIC DNA]</scope>
    <source>
        <strain>K12 / W3110 / ATCC 27325 / DSM 5911</strain>
    </source>
</reference>
<reference key="3">
    <citation type="journal article" date="1997" name="Science">
        <title>The complete genome sequence of Escherichia coli K-12.</title>
        <authorList>
            <person name="Blattner F.R."/>
            <person name="Plunkett G. III"/>
            <person name="Bloch C.A."/>
            <person name="Perna N.T."/>
            <person name="Burland V."/>
            <person name="Riley M."/>
            <person name="Collado-Vides J."/>
            <person name="Glasner J.D."/>
            <person name="Rode C.K."/>
            <person name="Mayhew G.F."/>
            <person name="Gregor J."/>
            <person name="Davis N.W."/>
            <person name="Kirkpatrick H.A."/>
            <person name="Goeden M.A."/>
            <person name="Rose D.J."/>
            <person name="Mau B."/>
            <person name="Shao Y."/>
        </authorList>
    </citation>
    <scope>NUCLEOTIDE SEQUENCE [LARGE SCALE GENOMIC DNA]</scope>
    <source>
        <strain>K12 / MG1655 / ATCC 47076</strain>
    </source>
</reference>
<reference key="4">
    <citation type="journal article" date="2006" name="Mol. Syst. Biol.">
        <title>Highly accurate genome sequences of Escherichia coli K-12 strains MG1655 and W3110.</title>
        <authorList>
            <person name="Hayashi K."/>
            <person name="Morooka N."/>
            <person name="Yamamoto Y."/>
            <person name="Fujita K."/>
            <person name="Isono K."/>
            <person name="Choi S."/>
            <person name="Ohtsubo E."/>
            <person name="Baba T."/>
            <person name="Wanner B.L."/>
            <person name="Mori H."/>
            <person name="Horiuchi T."/>
        </authorList>
    </citation>
    <scope>NUCLEOTIDE SEQUENCE [LARGE SCALE GENOMIC DNA]</scope>
    <source>
        <strain>K12 / W3110 / ATCC 27325 / DSM 5911</strain>
    </source>
</reference>